<accession>O23939</accession>
<gene>
    <name type="primary">EO</name>
    <name type="synonym">QR</name>
</gene>
<proteinExistence type="evidence at transcript level"/>
<reference key="1">
    <citation type="submission" date="1997-09" db="EMBL/GenBank/DDBJ databases">
        <title>Isolation and characterization of cDNAs from genes differentially expressed during ripening of wild strawberry (Fragaria vesca L.).</title>
        <authorList>
            <person name="Nam Y.W."/>
            <person name="Tichit L."/>
            <person name="Marty I."/>
            <person name="Lelievre J.M."/>
        </authorList>
    </citation>
    <scope>NUCLEOTIDE SEQUENCE [MRNA]</scope>
</reference>
<reference key="2">
    <citation type="journal article" date="2006" name="Plant Cell">
        <title>FaQR, required for the biosynthesis of the strawberry flavor compound 4-hydroxy-2,5-dimethyl-3(2H)-furanone, encodes an enone oxidoreductase.</title>
        <authorList>
            <person name="Raab T."/>
            <person name="Lopez-Raez J.A."/>
            <person name="Klein D."/>
            <person name="Caballero J.L."/>
            <person name="Moyano E."/>
            <person name="Schwab W."/>
            <person name="Munoz-Blanco J."/>
        </authorList>
    </citation>
    <scope>IDENTIFICATION</scope>
</reference>
<feature type="chain" id="PRO_0000428655" description="2-methylene-furan-3-one reductase">
    <location>
        <begin position="1"/>
        <end position="322"/>
    </location>
</feature>
<feature type="binding site" evidence="1">
    <location>
        <position position="59"/>
    </location>
    <ligand>
        <name>NADP(+)</name>
        <dbReference type="ChEBI" id="CHEBI:58349"/>
    </ligand>
</feature>
<feature type="binding site" evidence="1">
    <location>
        <position position="59"/>
    </location>
    <ligand>
        <name>substrate</name>
    </ligand>
</feature>
<feature type="binding site" evidence="1">
    <location>
        <begin position="174"/>
        <end position="175"/>
    </location>
    <ligand>
        <name>NADP(+)</name>
        <dbReference type="ChEBI" id="CHEBI:58349"/>
    </ligand>
</feature>
<feature type="binding site" evidence="1">
    <location>
        <begin position="197"/>
        <end position="200"/>
    </location>
    <ligand>
        <name>NADP(+)</name>
        <dbReference type="ChEBI" id="CHEBI:58349"/>
    </ligand>
</feature>
<feature type="binding site" evidence="1">
    <location>
        <position position="215"/>
    </location>
    <ligand>
        <name>NADP(+)</name>
        <dbReference type="ChEBI" id="CHEBI:58349"/>
    </ligand>
</feature>
<feature type="binding site" evidence="1">
    <location>
        <position position="253"/>
    </location>
    <ligand>
        <name>NADP(+)</name>
        <dbReference type="ChEBI" id="CHEBI:58349"/>
    </ligand>
</feature>
<feature type="binding site" evidence="1">
    <location>
        <begin position="264"/>
        <end position="266"/>
    </location>
    <ligand>
        <name>NADP(+)</name>
        <dbReference type="ChEBI" id="CHEBI:58349"/>
    </ligand>
</feature>
<feature type="binding site" evidence="1">
    <location>
        <begin position="311"/>
        <end position="312"/>
    </location>
    <ligand>
        <name>NADP(+)</name>
        <dbReference type="ChEBI" id="CHEBI:58349"/>
    </ligand>
</feature>
<comment type="function">
    <text evidence="2">Enone oxidoreductase involved in the biosynthesis of 4-hydroxy-2,5-dimethyl-3(2H)-furanone (HDMF or furaneol), the key flavor compound in strawberries.</text>
</comment>
<comment type="catalytic activity">
    <reaction evidence="2">
        <text>4-hydroxy-2,5-dimethyl-furan-3(2H)-one + NADP(+) = 4-hydroxy-5-methyl-2-methylenefuran-3(2H)-one + NADPH + H(+)</text>
        <dbReference type="Rhea" id="RHEA:39111"/>
        <dbReference type="ChEBI" id="CHEBI:15378"/>
        <dbReference type="ChEBI" id="CHEBI:57783"/>
        <dbReference type="ChEBI" id="CHEBI:58349"/>
        <dbReference type="ChEBI" id="CHEBI:76245"/>
        <dbReference type="ChEBI" id="CHEBI:76247"/>
        <dbReference type="EC" id="1.3.1.105"/>
    </reaction>
</comment>
<comment type="subunit">
    <text evidence="2">Monomer.</text>
</comment>
<comment type="similarity">
    <text evidence="3">Belongs to the zinc-containing alcohol dehydrogenase family. Quinone oxidoreductase subfamily.</text>
</comment>
<protein>
    <recommendedName>
        <fullName>2-methylene-furan-3-one reductase</fullName>
        <ecNumber evidence="2">1.3.1.105</ecNumber>
    </recommendedName>
    <alternativeName>
        <fullName>Enone oxidoreductase</fullName>
    </alternativeName>
    <alternativeName>
        <fullName>Quinone oxidoreductase</fullName>
        <shortName>FaQR</shortName>
    </alternativeName>
</protein>
<keyword id="KW-0520">NAD</keyword>
<keyword id="KW-0521">NADP</keyword>
<keyword id="KW-0560">Oxidoreductase</keyword>
<evidence type="ECO:0000250" key="1"/>
<evidence type="ECO:0000250" key="2">
    <source>
        <dbReference type="UniProtKB" id="Q84V25"/>
    </source>
</evidence>
<evidence type="ECO:0000305" key="3"/>
<organism>
    <name type="scientific">Fragaria vesca</name>
    <name type="common">Woodland strawberry</name>
    <name type="synonym">Potentilla vesca</name>
    <dbReference type="NCBI Taxonomy" id="57918"/>
    <lineage>
        <taxon>Eukaryota</taxon>
        <taxon>Viridiplantae</taxon>
        <taxon>Streptophyta</taxon>
        <taxon>Embryophyta</taxon>
        <taxon>Tracheophyta</taxon>
        <taxon>Spermatophyta</taxon>
        <taxon>Magnoliopsida</taxon>
        <taxon>eudicotyledons</taxon>
        <taxon>Gunneridae</taxon>
        <taxon>Pentapetalae</taxon>
        <taxon>rosids</taxon>
        <taxon>fabids</taxon>
        <taxon>Rosales</taxon>
        <taxon>Rosaceae</taxon>
        <taxon>Rosoideae</taxon>
        <taxon>Potentilleae</taxon>
        <taxon>Fragariinae</taxon>
        <taxon>Fragaria</taxon>
    </lineage>
</organism>
<sequence>MAAAPSESIPSVNKAWVXSEYGKTSDVLKFDPSVAVPEIKEDQVLIKVVAASLNPVDFKRALGYFKDTDSPLPTIPGYYVAGVVVKVGSQVTKFKVGDEVYGDLNETALVNPTRFGSLAEYTAADERVLAHKPKNLSFIEAASLPLAIETAHEGLERAELSAGKSVLVLGGAGGVGTHIIQLAKHVFGASKVAATASTKKLDLLRTLGADLAIDYTKENFEDLPEKFDVVYDAVGETDKAVKAVKEGGKVVTIVGPATPPAILFVLTSKGSVLEKLKPYLESGKVKPVLDPTSPYPFTKVVEAFGYLESSRATGKVVVYPIP</sequence>
<name>ENOX_FRAVE</name>
<dbReference type="EC" id="1.3.1.105" evidence="2"/>
<dbReference type="EMBL" id="AJ001445">
    <property type="protein sequence ID" value="CAA04767.1"/>
    <property type="molecule type" value="mRNA"/>
</dbReference>
<dbReference type="SMR" id="O23939"/>
<dbReference type="BRENDA" id="1.3.1.105">
    <property type="organism ID" value="2322"/>
</dbReference>
<dbReference type="EvolutionaryTrace" id="O23939"/>
<dbReference type="GO" id="GO:0102978">
    <property type="term" value="F:furaneol oxidoreductase activity"/>
    <property type="evidence" value="ECO:0007669"/>
    <property type="project" value="UniProtKB-EC"/>
</dbReference>
<dbReference type="GO" id="GO:0008270">
    <property type="term" value="F:zinc ion binding"/>
    <property type="evidence" value="ECO:0007669"/>
    <property type="project" value="InterPro"/>
</dbReference>
<dbReference type="CDD" id="cd05289">
    <property type="entry name" value="MDR_like_2"/>
    <property type="match status" value="1"/>
</dbReference>
<dbReference type="Gene3D" id="3.90.180.10">
    <property type="entry name" value="Medium-chain alcohol dehydrogenases, catalytic domain"/>
    <property type="match status" value="1"/>
</dbReference>
<dbReference type="Gene3D" id="3.40.50.720">
    <property type="entry name" value="NAD(P)-binding Rossmann-like Domain"/>
    <property type="match status" value="1"/>
</dbReference>
<dbReference type="InterPro" id="IPR013154">
    <property type="entry name" value="ADH-like_N"/>
</dbReference>
<dbReference type="InterPro" id="IPR044626">
    <property type="entry name" value="AOR-like"/>
</dbReference>
<dbReference type="InterPro" id="IPR011032">
    <property type="entry name" value="GroES-like_sf"/>
</dbReference>
<dbReference type="InterPro" id="IPR036291">
    <property type="entry name" value="NAD(P)-bd_dom_sf"/>
</dbReference>
<dbReference type="InterPro" id="IPR020843">
    <property type="entry name" value="PKS_ER"/>
</dbReference>
<dbReference type="InterPro" id="IPR002364">
    <property type="entry name" value="Quin_OxRdtase/zeta-crystal_CS"/>
</dbReference>
<dbReference type="PANTHER" id="PTHR44573:SF3">
    <property type="entry name" value="CYTOSOLIC ALKENAL_ONE OXIDOREDUCTASE"/>
    <property type="match status" value="1"/>
</dbReference>
<dbReference type="PANTHER" id="PTHR44573">
    <property type="entry name" value="NADPH-DEPENDENT ALKENAL/ONE OXIDOREDUCTASE, CHLOROPLASTIC"/>
    <property type="match status" value="1"/>
</dbReference>
<dbReference type="Pfam" id="PF08240">
    <property type="entry name" value="ADH_N"/>
    <property type="match status" value="1"/>
</dbReference>
<dbReference type="Pfam" id="PF13602">
    <property type="entry name" value="ADH_zinc_N_2"/>
    <property type="match status" value="1"/>
</dbReference>
<dbReference type="SMART" id="SM00829">
    <property type="entry name" value="PKS_ER"/>
    <property type="match status" value="1"/>
</dbReference>
<dbReference type="SUPFAM" id="SSF50129">
    <property type="entry name" value="GroES-like"/>
    <property type="match status" value="1"/>
</dbReference>
<dbReference type="SUPFAM" id="SSF51735">
    <property type="entry name" value="NAD(P)-binding Rossmann-fold domains"/>
    <property type="match status" value="1"/>
</dbReference>
<dbReference type="PROSITE" id="PS01162">
    <property type="entry name" value="QOR_ZETA_CRYSTAL"/>
    <property type="match status" value="1"/>
</dbReference>